<reference key="1">
    <citation type="journal article" date="2004" name="Proc. Natl. Acad. Sci. U.S.A.">
        <title>The louse-borne human pathogen Bartonella quintana is a genomic derivative of the zoonotic agent Bartonella henselae.</title>
        <authorList>
            <person name="Alsmark U.C.M."/>
            <person name="Frank A.C."/>
            <person name="Karlberg E.O."/>
            <person name="Legault B.-A."/>
            <person name="Ardell D.H."/>
            <person name="Canbaeck B."/>
            <person name="Eriksson A.-S."/>
            <person name="Naeslund A.K."/>
            <person name="Handley S.A."/>
            <person name="Huvet M."/>
            <person name="La Scola B."/>
            <person name="Holmberg M."/>
            <person name="Andersson S.G.E."/>
        </authorList>
    </citation>
    <scope>NUCLEOTIDE SEQUENCE [LARGE SCALE GENOMIC DNA]</scope>
    <source>
        <strain>Toulouse</strain>
    </source>
</reference>
<evidence type="ECO:0000255" key="1">
    <source>
        <dbReference type="HAMAP-Rule" id="MF_01520"/>
    </source>
</evidence>
<protein>
    <recommendedName>
        <fullName evidence="1">Bifunctional enzyme IspD/IspF</fullName>
    </recommendedName>
    <domain>
        <recommendedName>
            <fullName evidence="1">2-C-methyl-D-erythritol 4-phosphate cytidylyltransferase</fullName>
            <ecNumber evidence="1">2.7.7.60</ecNumber>
        </recommendedName>
        <alternativeName>
            <fullName evidence="1">4-diphosphocytidyl-2C-methyl-D-erythritol synthase</fullName>
        </alternativeName>
        <alternativeName>
            <fullName evidence="1">MEP cytidylyltransferase</fullName>
            <shortName evidence="1">MCT</shortName>
        </alternativeName>
    </domain>
    <domain>
        <recommendedName>
            <fullName evidence="1">2-C-methyl-D-erythritol 2,4-cyclodiphosphate synthase</fullName>
            <shortName evidence="1">MECDP-synthase</shortName>
            <shortName evidence="1">MECPP-synthase</shortName>
            <shortName evidence="1">MECPS</shortName>
            <ecNumber evidence="1">4.6.1.12</ecNumber>
        </recommendedName>
    </domain>
</protein>
<accession>Q6G164</accession>
<name>ISPDF_BARQU</name>
<organism>
    <name type="scientific">Bartonella quintana (strain Toulouse)</name>
    <name type="common">Rochalimaea quintana</name>
    <dbReference type="NCBI Taxonomy" id="283165"/>
    <lineage>
        <taxon>Bacteria</taxon>
        <taxon>Pseudomonadati</taxon>
        <taxon>Pseudomonadota</taxon>
        <taxon>Alphaproteobacteria</taxon>
        <taxon>Hyphomicrobiales</taxon>
        <taxon>Bartonellaceae</taxon>
        <taxon>Bartonella</taxon>
    </lineage>
</organism>
<proteinExistence type="inferred from homology"/>
<feature type="chain" id="PRO_0000075657" description="Bifunctional enzyme IspD/IspF">
    <location>
        <begin position="1"/>
        <end position="391"/>
    </location>
</feature>
<feature type="region of interest" description="2-C-methyl-D-erythritol 4-phosphate cytidylyltransferase" evidence="1">
    <location>
        <begin position="1"/>
        <end position="230"/>
    </location>
</feature>
<feature type="region of interest" description="2-C-methyl-D-erythritol 2,4-cyclodiphosphate synthase" evidence="1">
    <location>
        <begin position="231"/>
        <end position="391"/>
    </location>
</feature>
<feature type="binding site" evidence="1">
    <location>
        <begin position="237"/>
        <end position="239"/>
    </location>
    <ligand>
        <name>4-CDP-2-C-methyl-D-erythritol 2-phosphate</name>
        <dbReference type="ChEBI" id="CHEBI:57919"/>
    </ligand>
</feature>
<feature type="binding site" evidence="1">
    <location>
        <position position="237"/>
    </location>
    <ligand>
        <name>a divalent metal cation</name>
        <dbReference type="ChEBI" id="CHEBI:60240"/>
    </ligand>
</feature>
<feature type="binding site" evidence="1">
    <location>
        <position position="239"/>
    </location>
    <ligand>
        <name>a divalent metal cation</name>
        <dbReference type="ChEBI" id="CHEBI:60240"/>
    </ligand>
</feature>
<feature type="binding site" evidence="1">
    <location>
        <begin position="263"/>
        <end position="264"/>
    </location>
    <ligand>
        <name>4-CDP-2-C-methyl-D-erythritol 2-phosphate</name>
        <dbReference type="ChEBI" id="CHEBI:57919"/>
    </ligand>
</feature>
<feature type="binding site" evidence="1">
    <location>
        <position position="271"/>
    </location>
    <ligand>
        <name>a divalent metal cation</name>
        <dbReference type="ChEBI" id="CHEBI:60240"/>
    </ligand>
</feature>
<feature type="binding site" evidence="1">
    <location>
        <begin position="285"/>
        <end position="287"/>
    </location>
    <ligand>
        <name>4-CDP-2-C-methyl-D-erythritol 2-phosphate</name>
        <dbReference type="ChEBI" id="CHEBI:57919"/>
    </ligand>
</feature>
<feature type="binding site" evidence="1">
    <location>
        <begin position="361"/>
        <end position="364"/>
    </location>
    <ligand>
        <name>4-CDP-2-C-methyl-D-erythritol 2-phosphate</name>
        <dbReference type="ChEBI" id="CHEBI:57919"/>
    </ligand>
</feature>
<feature type="binding site" evidence="1">
    <location>
        <position position="368"/>
    </location>
    <ligand>
        <name>4-CDP-2-C-methyl-D-erythritol 2-phosphate</name>
        <dbReference type="ChEBI" id="CHEBI:57919"/>
    </ligand>
</feature>
<feature type="binding site" evidence="1">
    <location>
        <position position="371"/>
    </location>
    <ligand>
        <name>4-CDP-2-C-methyl-D-erythritol 2-phosphate</name>
        <dbReference type="ChEBI" id="CHEBI:57919"/>
    </ligand>
</feature>
<feature type="site" description="Transition state stabilizer" evidence="1">
    <location>
        <position position="9"/>
    </location>
</feature>
<feature type="site" description="Transition state stabilizer" evidence="1">
    <location>
        <position position="18"/>
    </location>
</feature>
<feature type="site" description="Positions MEP for the nucleophilic attack" evidence="1">
    <location>
        <position position="149"/>
    </location>
</feature>
<feature type="site" description="Positions MEP for the nucleophilic attack" evidence="1">
    <location>
        <position position="206"/>
    </location>
</feature>
<feature type="site" description="Transition state stabilizer" evidence="1">
    <location>
        <position position="263"/>
    </location>
</feature>
<feature type="site" description="Transition state stabilizer" evidence="1">
    <location>
        <position position="362"/>
    </location>
</feature>
<keyword id="KW-0414">Isoprene biosynthesis</keyword>
<keyword id="KW-0456">Lyase</keyword>
<keyword id="KW-0479">Metal-binding</keyword>
<keyword id="KW-0511">Multifunctional enzyme</keyword>
<keyword id="KW-0548">Nucleotidyltransferase</keyword>
<keyword id="KW-0808">Transferase</keyword>
<comment type="function">
    <text evidence="1">Bifunctional enzyme that catalyzes the formation of 4-diphosphocytidyl-2-C-methyl-D-erythritol from CTP and 2-C-methyl-D-erythritol 4-phosphate (MEP) (IspD), and catalyzes the conversion of 4-diphosphocytidyl-2-C-methyl-D-erythritol 2-phosphate (CDP-ME2P) to 2-C-methyl-D-erythritol 2,4-cyclodiphosphate (ME-CPP) with a corresponding release of cytidine 5-monophosphate (CMP) (IspF).</text>
</comment>
<comment type="catalytic activity">
    <reaction evidence="1">
        <text>2-C-methyl-D-erythritol 4-phosphate + CTP + H(+) = 4-CDP-2-C-methyl-D-erythritol + diphosphate</text>
        <dbReference type="Rhea" id="RHEA:13429"/>
        <dbReference type="ChEBI" id="CHEBI:15378"/>
        <dbReference type="ChEBI" id="CHEBI:33019"/>
        <dbReference type="ChEBI" id="CHEBI:37563"/>
        <dbReference type="ChEBI" id="CHEBI:57823"/>
        <dbReference type="ChEBI" id="CHEBI:58262"/>
        <dbReference type="EC" id="2.7.7.60"/>
    </reaction>
</comment>
<comment type="catalytic activity">
    <reaction evidence="1">
        <text>4-CDP-2-C-methyl-D-erythritol 2-phosphate = 2-C-methyl-D-erythritol 2,4-cyclic diphosphate + CMP</text>
        <dbReference type="Rhea" id="RHEA:23864"/>
        <dbReference type="ChEBI" id="CHEBI:57919"/>
        <dbReference type="ChEBI" id="CHEBI:58483"/>
        <dbReference type="ChEBI" id="CHEBI:60377"/>
        <dbReference type="EC" id="4.6.1.12"/>
    </reaction>
</comment>
<comment type="cofactor">
    <cofactor evidence="1">
        <name>a divalent metal cation</name>
        <dbReference type="ChEBI" id="CHEBI:60240"/>
    </cofactor>
</comment>
<comment type="pathway">
    <text evidence="1">Isoprenoid biosynthesis; isopentenyl diphosphate biosynthesis via DXP pathway; isopentenyl diphosphate from 1-deoxy-D-xylulose 5-phosphate: step 2/6.</text>
</comment>
<comment type="pathway">
    <text evidence="1">Isoprenoid biosynthesis; isopentenyl diphosphate biosynthesis via DXP pathway; isopentenyl diphosphate from 1-deoxy-D-xylulose 5-phosphate: step 4/6.</text>
</comment>
<comment type="similarity">
    <text evidence="1">In the N-terminal section; belongs to the IspD/TarI cytidylyltransferase family. IspD subfamily.</text>
</comment>
<comment type="similarity">
    <text evidence="1">In the C-terminal section; belongs to the IspF family.</text>
</comment>
<sequence>MLAAGRGKRAGSLQKNPKQYRLLGQKPVICHTVRCFCQHPAITTIILVIHPEDRQICEQAITDFKEHLIIVEGGNTRQISTLRGLHALKKFKPKYVHIHDGARPFIENKLLEKIHTTVNHQEGVLPVLPVSDTLKRVNSTHRVLETIPHTHLYSAQTPQCFPFERILAAHERAMQTCKKEFTDDSAIAEWFGIPMHTIPGDSHNIKITWHEDFDTAHLYLKKKMQMFPDIRTGNGYDVHSFEEGTSLILCGIKIPFHKKLKGHSDADVAFHALTDALLATQGAGDIGTHFLPSDPQWKNAPSEIFLRHALEIIKQAGGRIANVDITLIAETPKIGPYRHTMTENLMNILSLSLDRISIKATTNEKLGFIGREEGIAALATATVLYPGEIPK</sequence>
<dbReference type="EC" id="2.7.7.60" evidence="1"/>
<dbReference type="EC" id="4.6.1.12" evidence="1"/>
<dbReference type="EMBL" id="BX897700">
    <property type="protein sequence ID" value="CAF25997.1"/>
    <property type="molecule type" value="Genomic_DNA"/>
</dbReference>
<dbReference type="SMR" id="Q6G164"/>
<dbReference type="KEGG" id="bqu:BQ04980"/>
<dbReference type="eggNOG" id="COG0245">
    <property type="taxonomic scope" value="Bacteria"/>
</dbReference>
<dbReference type="eggNOG" id="COG1211">
    <property type="taxonomic scope" value="Bacteria"/>
</dbReference>
<dbReference type="HOGENOM" id="CLU_042800_1_1_5"/>
<dbReference type="OrthoDB" id="9804336at2"/>
<dbReference type="UniPathway" id="UPA00056">
    <property type="reaction ID" value="UER00093"/>
</dbReference>
<dbReference type="UniPathway" id="UPA00056">
    <property type="reaction ID" value="UER00095"/>
</dbReference>
<dbReference type="Proteomes" id="UP000000597">
    <property type="component" value="Chromosome"/>
</dbReference>
<dbReference type="GO" id="GO:0008685">
    <property type="term" value="F:2-C-methyl-D-erythritol 2,4-cyclodiphosphate synthase activity"/>
    <property type="evidence" value="ECO:0007669"/>
    <property type="project" value="UniProtKB-UniRule"/>
</dbReference>
<dbReference type="GO" id="GO:0050518">
    <property type="term" value="F:2-C-methyl-D-erythritol 4-phosphate cytidylyltransferase activity"/>
    <property type="evidence" value="ECO:0007669"/>
    <property type="project" value="UniProtKB-UniRule"/>
</dbReference>
<dbReference type="GO" id="GO:0046872">
    <property type="term" value="F:metal ion binding"/>
    <property type="evidence" value="ECO:0007669"/>
    <property type="project" value="UniProtKB-KW"/>
</dbReference>
<dbReference type="GO" id="GO:0019288">
    <property type="term" value="P:isopentenyl diphosphate biosynthetic process, methylerythritol 4-phosphate pathway"/>
    <property type="evidence" value="ECO:0007669"/>
    <property type="project" value="UniProtKB-UniRule"/>
</dbReference>
<dbReference type="GO" id="GO:0016114">
    <property type="term" value="P:terpenoid biosynthetic process"/>
    <property type="evidence" value="ECO:0007669"/>
    <property type="project" value="InterPro"/>
</dbReference>
<dbReference type="CDD" id="cd02516">
    <property type="entry name" value="CDP-ME_synthetase"/>
    <property type="match status" value="1"/>
</dbReference>
<dbReference type="CDD" id="cd00554">
    <property type="entry name" value="MECDP_synthase"/>
    <property type="match status" value="1"/>
</dbReference>
<dbReference type="FunFam" id="3.90.550.10:FF:000003">
    <property type="entry name" value="2-C-methyl-D-erythritol 4-phosphate cytidylyltransferase"/>
    <property type="match status" value="1"/>
</dbReference>
<dbReference type="Gene3D" id="3.30.1330.50">
    <property type="entry name" value="2-C-methyl-D-erythritol 2,4-cyclodiphosphate synthase"/>
    <property type="match status" value="1"/>
</dbReference>
<dbReference type="Gene3D" id="3.90.550.10">
    <property type="entry name" value="Spore Coat Polysaccharide Biosynthesis Protein SpsA, Chain A"/>
    <property type="match status" value="1"/>
</dbReference>
<dbReference type="HAMAP" id="MF_00108">
    <property type="entry name" value="IspD"/>
    <property type="match status" value="1"/>
</dbReference>
<dbReference type="HAMAP" id="MF_01520">
    <property type="entry name" value="IspDF"/>
    <property type="match status" value="1"/>
</dbReference>
<dbReference type="HAMAP" id="MF_00107">
    <property type="entry name" value="IspF"/>
    <property type="match status" value="1"/>
</dbReference>
<dbReference type="InterPro" id="IPR001228">
    <property type="entry name" value="IspD"/>
</dbReference>
<dbReference type="InterPro" id="IPR026596">
    <property type="entry name" value="IspD/F"/>
</dbReference>
<dbReference type="InterPro" id="IPR034683">
    <property type="entry name" value="IspD/TarI"/>
</dbReference>
<dbReference type="InterPro" id="IPR003526">
    <property type="entry name" value="MECDP_synthase"/>
</dbReference>
<dbReference type="InterPro" id="IPR020555">
    <property type="entry name" value="MECDP_synthase_CS"/>
</dbReference>
<dbReference type="InterPro" id="IPR036571">
    <property type="entry name" value="MECDP_synthase_sf"/>
</dbReference>
<dbReference type="InterPro" id="IPR029044">
    <property type="entry name" value="Nucleotide-diphossugar_trans"/>
</dbReference>
<dbReference type="NCBIfam" id="TIGR00453">
    <property type="entry name" value="ispD"/>
    <property type="match status" value="1"/>
</dbReference>
<dbReference type="NCBIfam" id="TIGR00151">
    <property type="entry name" value="ispF"/>
    <property type="match status" value="1"/>
</dbReference>
<dbReference type="NCBIfam" id="NF006899">
    <property type="entry name" value="PRK09382.1"/>
    <property type="match status" value="1"/>
</dbReference>
<dbReference type="PANTHER" id="PTHR43181">
    <property type="entry name" value="2-C-METHYL-D-ERYTHRITOL 2,4-CYCLODIPHOSPHATE SYNTHASE, CHLOROPLASTIC"/>
    <property type="match status" value="1"/>
</dbReference>
<dbReference type="PANTHER" id="PTHR43181:SF1">
    <property type="entry name" value="2-C-METHYL-D-ERYTHRITOL 2,4-CYCLODIPHOSPHATE SYNTHASE, CHLOROPLASTIC"/>
    <property type="match status" value="1"/>
</dbReference>
<dbReference type="Pfam" id="PF01128">
    <property type="entry name" value="IspD"/>
    <property type="match status" value="1"/>
</dbReference>
<dbReference type="Pfam" id="PF02542">
    <property type="entry name" value="YgbB"/>
    <property type="match status" value="1"/>
</dbReference>
<dbReference type="SUPFAM" id="SSF69765">
    <property type="entry name" value="IpsF-like"/>
    <property type="match status" value="1"/>
</dbReference>
<dbReference type="SUPFAM" id="SSF53448">
    <property type="entry name" value="Nucleotide-diphospho-sugar transferases"/>
    <property type="match status" value="1"/>
</dbReference>
<dbReference type="PROSITE" id="PS01350">
    <property type="entry name" value="ISPF"/>
    <property type="match status" value="1"/>
</dbReference>
<gene>
    <name evidence="1" type="primary">ispDF</name>
    <name type="ordered locus">BQ04980</name>
</gene>